<organism>
    <name type="scientific">Ligilactobacillus salivarius (strain UCC118)</name>
    <name type="common">Lactobacillus salivarius</name>
    <dbReference type="NCBI Taxonomy" id="362948"/>
    <lineage>
        <taxon>Bacteria</taxon>
        <taxon>Bacillati</taxon>
        <taxon>Bacillota</taxon>
        <taxon>Bacilli</taxon>
        <taxon>Lactobacillales</taxon>
        <taxon>Lactobacillaceae</taxon>
        <taxon>Ligilactobacillus</taxon>
    </lineage>
</organism>
<name>CLPX_LIGS1</name>
<proteinExistence type="inferred from homology"/>
<evidence type="ECO:0000255" key="1">
    <source>
        <dbReference type="HAMAP-Rule" id="MF_00175"/>
    </source>
</evidence>
<evidence type="ECO:0000255" key="2">
    <source>
        <dbReference type="PROSITE-ProRule" id="PRU01250"/>
    </source>
</evidence>
<sequence length="408" mass="45095">MFENEDNKTPATCSFCGKTEDQVKSMISGPGVYICNECVELAQSIIDTETKAEAQKDFTNVPTPHEIVDTLNQYVVGQEEAKKTLAVAVYNHYKRVNASLSDDDGTELQKSNICLVGPTGSGKTFLAQNLARILNVPFAIADATTLTEAGYVGEDVENILLKLLQNADYDVERAQRGIIYIDEIDKIAKKSENVSITRDVSGEGVQQALLKILEGTIANVPPQGGRKHPQQEFIQIDTTNILFIVGGAFDGIETMVKNRLGDKTIGFGVDSKQEYDPDKSLMQQIIPEDLLKFGLIPEFIGRLPILTALEKLTEEDLVRILTEPKNALIKQYQKLVSFDDVSLKFEDDAVKEIAHLAIERNTGARGLRSIVEATMRDIMFDIPSEDNIKEVVITKDTVDGKSKPEIVK</sequence>
<dbReference type="EMBL" id="CP000233">
    <property type="protein sequence ID" value="ABD99454.1"/>
    <property type="molecule type" value="Genomic_DNA"/>
</dbReference>
<dbReference type="RefSeq" id="WP_003700010.1">
    <property type="nucleotide sequence ID" value="NC_007929.1"/>
</dbReference>
<dbReference type="RefSeq" id="YP_535537.1">
    <property type="nucleotide sequence ID" value="NC_007929.1"/>
</dbReference>
<dbReference type="SMR" id="Q1WU81"/>
<dbReference type="STRING" id="362948.LSL_0644"/>
<dbReference type="GeneID" id="89465436"/>
<dbReference type="KEGG" id="lsl:LSL_0644"/>
<dbReference type="PATRIC" id="fig|362948.14.peg.724"/>
<dbReference type="HOGENOM" id="CLU_014218_8_2_9"/>
<dbReference type="OrthoDB" id="9804062at2"/>
<dbReference type="Proteomes" id="UP000006559">
    <property type="component" value="Chromosome"/>
</dbReference>
<dbReference type="GO" id="GO:0009376">
    <property type="term" value="C:HslUV protease complex"/>
    <property type="evidence" value="ECO:0007669"/>
    <property type="project" value="TreeGrafter"/>
</dbReference>
<dbReference type="GO" id="GO:0005524">
    <property type="term" value="F:ATP binding"/>
    <property type="evidence" value="ECO:0007669"/>
    <property type="project" value="UniProtKB-UniRule"/>
</dbReference>
<dbReference type="GO" id="GO:0016887">
    <property type="term" value="F:ATP hydrolysis activity"/>
    <property type="evidence" value="ECO:0007669"/>
    <property type="project" value="InterPro"/>
</dbReference>
<dbReference type="GO" id="GO:0140662">
    <property type="term" value="F:ATP-dependent protein folding chaperone"/>
    <property type="evidence" value="ECO:0007669"/>
    <property type="project" value="InterPro"/>
</dbReference>
<dbReference type="GO" id="GO:0046983">
    <property type="term" value="F:protein dimerization activity"/>
    <property type="evidence" value="ECO:0007669"/>
    <property type="project" value="InterPro"/>
</dbReference>
<dbReference type="GO" id="GO:0051082">
    <property type="term" value="F:unfolded protein binding"/>
    <property type="evidence" value="ECO:0007669"/>
    <property type="project" value="UniProtKB-UniRule"/>
</dbReference>
<dbReference type="GO" id="GO:0008270">
    <property type="term" value="F:zinc ion binding"/>
    <property type="evidence" value="ECO:0007669"/>
    <property type="project" value="InterPro"/>
</dbReference>
<dbReference type="GO" id="GO:0051301">
    <property type="term" value="P:cell division"/>
    <property type="evidence" value="ECO:0007669"/>
    <property type="project" value="TreeGrafter"/>
</dbReference>
<dbReference type="GO" id="GO:0051603">
    <property type="term" value="P:proteolysis involved in protein catabolic process"/>
    <property type="evidence" value="ECO:0007669"/>
    <property type="project" value="TreeGrafter"/>
</dbReference>
<dbReference type="CDD" id="cd19497">
    <property type="entry name" value="RecA-like_ClpX"/>
    <property type="match status" value="1"/>
</dbReference>
<dbReference type="FunFam" id="1.10.8.60:FF:000002">
    <property type="entry name" value="ATP-dependent Clp protease ATP-binding subunit ClpX"/>
    <property type="match status" value="1"/>
</dbReference>
<dbReference type="FunFam" id="3.40.50.300:FF:000005">
    <property type="entry name" value="ATP-dependent Clp protease ATP-binding subunit ClpX"/>
    <property type="match status" value="1"/>
</dbReference>
<dbReference type="Gene3D" id="1.10.8.60">
    <property type="match status" value="1"/>
</dbReference>
<dbReference type="Gene3D" id="6.20.220.10">
    <property type="entry name" value="ClpX chaperone, C4-type zinc finger domain"/>
    <property type="match status" value="1"/>
</dbReference>
<dbReference type="Gene3D" id="3.40.50.300">
    <property type="entry name" value="P-loop containing nucleotide triphosphate hydrolases"/>
    <property type="match status" value="1"/>
</dbReference>
<dbReference type="HAMAP" id="MF_00175">
    <property type="entry name" value="ClpX"/>
    <property type="match status" value="1"/>
</dbReference>
<dbReference type="InterPro" id="IPR003593">
    <property type="entry name" value="AAA+_ATPase"/>
</dbReference>
<dbReference type="InterPro" id="IPR050052">
    <property type="entry name" value="ATP-dep_Clp_protease_ClpX"/>
</dbReference>
<dbReference type="InterPro" id="IPR003959">
    <property type="entry name" value="ATPase_AAA_core"/>
</dbReference>
<dbReference type="InterPro" id="IPR019489">
    <property type="entry name" value="Clp_ATPase_C"/>
</dbReference>
<dbReference type="InterPro" id="IPR004487">
    <property type="entry name" value="Clp_protease_ATP-bd_su_ClpX"/>
</dbReference>
<dbReference type="InterPro" id="IPR046425">
    <property type="entry name" value="ClpX_bact"/>
</dbReference>
<dbReference type="InterPro" id="IPR027417">
    <property type="entry name" value="P-loop_NTPase"/>
</dbReference>
<dbReference type="InterPro" id="IPR010603">
    <property type="entry name" value="Znf_CppX_C4"/>
</dbReference>
<dbReference type="InterPro" id="IPR038366">
    <property type="entry name" value="Znf_CppX_C4_sf"/>
</dbReference>
<dbReference type="NCBIfam" id="TIGR00382">
    <property type="entry name" value="clpX"/>
    <property type="match status" value="1"/>
</dbReference>
<dbReference type="NCBIfam" id="NF003745">
    <property type="entry name" value="PRK05342.1"/>
    <property type="match status" value="1"/>
</dbReference>
<dbReference type="PANTHER" id="PTHR48102:SF7">
    <property type="entry name" value="ATP-DEPENDENT CLP PROTEASE ATP-BINDING SUBUNIT CLPX-LIKE, MITOCHONDRIAL"/>
    <property type="match status" value="1"/>
</dbReference>
<dbReference type="PANTHER" id="PTHR48102">
    <property type="entry name" value="ATP-DEPENDENT CLP PROTEASE ATP-BINDING SUBUNIT CLPX-LIKE, MITOCHONDRIAL-RELATED"/>
    <property type="match status" value="1"/>
</dbReference>
<dbReference type="Pfam" id="PF07724">
    <property type="entry name" value="AAA_2"/>
    <property type="match status" value="1"/>
</dbReference>
<dbReference type="Pfam" id="PF10431">
    <property type="entry name" value="ClpB_D2-small"/>
    <property type="match status" value="1"/>
</dbReference>
<dbReference type="Pfam" id="PF06689">
    <property type="entry name" value="zf-C4_ClpX"/>
    <property type="match status" value="1"/>
</dbReference>
<dbReference type="SMART" id="SM00382">
    <property type="entry name" value="AAA"/>
    <property type="match status" value="1"/>
</dbReference>
<dbReference type="SMART" id="SM01086">
    <property type="entry name" value="ClpB_D2-small"/>
    <property type="match status" value="1"/>
</dbReference>
<dbReference type="SMART" id="SM00994">
    <property type="entry name" value="zf-C4_ClpX"/>
    <property type="match status" value="1"/>
</dbReference>
<dbReference type="SUPFAM" id="SSF57716">
    <property type="entry name" value="Glucocorticoid receptor-like (DNA-binding domain)"/>
    <property type="match status" value="1"/>
</dbReference>
<dbReference type="SUPFAM" id="SSF52540">
    <property type="entry name" value="P-loop containing nucleoside triphosphate hydrolases"/>
    <property type="match status" value="1"/>
</dbReference>
<dbReference type="PROSITE" id="PS51902">
    <property type="entry name" value="CLPX_ZB"/>
    <property type="match status" value="1"/>
</dbReference>
<keyword id="KW-0067">ATP-binding</keyword>
<keyword id="KW-0143">Chaperone</keyword>
<keyword id="KW-0479">Metal-binding</keyword>
<keyword id="KW-0547">Nucleotide-binding</keyword>
<keyword id="KW-1185">Reference proteome</keyword>
<keyword id="KW-0862">Zinc</keyword>
<reference key="1">
    <citation type="journal article" date="2006" name="Proc. Natl. Acad. Sci. U.S.A.">
        <title>Multireplicon genome architecture of Lactobacillus salivarius.</title>
        <authorList>
            <person name="Claesson M.J."/>
            <person name="Li Y."/>
            <person name="Leahy S."/>
            <person name="Canchaya C."/>
            <person name="van Pijkeren J.P."/>
            <person name="Cerdeno-Tarraga A.M."/>
            <person name="Parkhill J."/>
            <person name="Flynn S."/>
            <person name="O'Sullivan G.C."/>
            <person name="Collins J.K."/>
            <person name="Higgins D."/>
            <person name="Shanahan F."/>
            <person name="Fitzgerald G.F."/>
            <person name="van Sinderen D."/>
            <person name="O'Toole P.W."/>
        </authorList>
    </citation>
    <scope>NUCLEOTIDE SEQUENCE [LARGE SCALE GENOMIC DNA]</scope>
    <source>
        <strain>UCC118</strain>
    </source>
</reference>
<gene>
    <name evidence="1" type="primary">clpX</name>
    <name type="ordered locus">LSL_0644</name>
</gene>
<protein>
    <recommendedName>
        <fullName evidence="1">ATP-dependent Clp protease ATP-binding subunit ClpX</fullName>
    </recommendedName>
</protein>
<comment type="function">
    <text evidence="1">ATP-dependent specificity component of the Clp protease. It directs the protease to specific substrates. Can perform chaperone functions in the absence of ClpP.</text>
</comment>
<comment type="subunit">
    <text evidence="1">Component of the ClpX-ClpP complex. Forms a hexameric ring that, in the presence of ATP, binds to fourteen ClpP subunits assembled into a disk-like structure with a central cavity, resembling the structure of eukaryotic proteasomes.</text>
</comment>
<comment type="similarity">
    <text evidence="1">Belongs to the ClpX chaperone family.</text>
</comment>
<accession>Q1WU81</accession>
<feature type="chain" id="PRO_1000024573" description="ATP-dependent Clp protease ATP-binding subunit ClpX">
    <location>
        <begin position="1"/>
        <end position="408"/>
    </location>
</feature>
<feature type="domain" description="ClpX-type ZB" evidence="2">
    <location>
        <begin position="1"/>
        <end position="54"/>
    </location>
</feature>
<feature type="binding site" evidence="2">
    <location>
        <position position="13"/>
    </location>
    <ligand>
        <name>Zn(2+)</name>
        <dbReference type="ChEBI" id="CHEBI:29105"/>
    </ligand>
</feature>
<feature type="binding site" evidence="2">
    <location>
        <position position="16"/>
    </location>
    <ligand>
        <name>Zn(2+)</name>
        <dbReference type="ChEBI" id="CHEBI:29105"/>
    </ligand>
</feature>
<feature type="binding site" evidence="2">
    <location>
        <position position="35"/>
    </location>
    <ligand>
        <name>Zn(2+)</name>
        <dbReference type="ChEBI" id="CHEBI:29105"/>
    </ligand>
</feature>
<feature type="binding site" evidence="2">
    <location>
        <position position="38"/>
    </location>
    <ligand>
        <name>Zn(2+)</name>
        <dbReference type="ChEBI" id="CHEBI:29105"/>
    </ligand>
</feature>
<feature type="binding site" evidence="1">
    <location>
        <begin position="118"/>
        <end position="125"/>
    </location>
    <ligand>
        <name>ATP</name>
        <dbReference type="ChEBI" id="CHEBI:30616"/>
    </ligand>
</feature>